<name>CYB_DIPOR</name>
<evidence type="ECO:0000250" key="1"/>
<evidence type="ECO:0000250" key="2">
    <source>
        <dbReference type="UniProtKB" id="P00157"/>
    </source>
</evidence>
<evidence type="ECO:0000255" key="3">
    <source>
        <dbReference type="PROSITE-ProRule" id="PRU00967"/>
    </source>
</evidence>
<evidence type="ECO:0000255" key="4">
    <source>
        <dbReference type="PROSITE-ProRule" id="PRU00968"/>
    </source>
</evidence>
<keyword id="KW-0249">Electron transport</keyword>
<keyword id="KW-0349">Heme</keyword>
<keyword id="KW-0408">Iron</keyword>
<keyword id="KW-0472">Membrane</keyword>
<keyword id="KW-0479">Metal-binding</keyword>
<keyword id="KW-0496">Mitochondrion</keyword>
<keyword id="KW-0999">Mitochondrion inner membrane</keyword>
<keyword id="KW-1185">Reference proteome</keyword>
<keyword id="KW-0679">Respiratory chain</keyword>
<keyword id="KW-0812">Transmembrane</keyword>
<keyword id="KW-1133">Transmembrane helix</keyword>
<keyword id="KW-0813">Transport</keyword>
<keyword id="KW-0830">Ubiquinone</keyword>
<feature type="chain" id="PRO_0000060890" description="Cytochrome b">
    <location>
        <begin position="1"/>
        <end position="379"/>
    </location>
</feature>
<feature type="transmembrane region" description="Helical" evidence="2">
    <location>
        <begin position="33"/>
        <end position="53"/>
    </location>
</feature>
<feature type="transmembrane region" description="Helical" evidence="2">
    <location>
        <begin position="77"/>
        <end position="98"/>
    </location>
</feature>
<feature type="transmembrane region" description="Helical" evidence="2">
    <location>
        <begin position="113"/>
        <end position="133"/>
    </location>
</feature>
<feature type="transmembrane region" description="Helical" evidence="2">
    <location>
        <begin position="178"/>
        <end position="198"/>
    </location>
</feature>
<feature type="transmembrane region" description="Helical" evidence="2">
    <location>
        <begin position="226"/>
        <end position="246"/>
    </location>
</feature>
<feature type="transmembrane region" description="Helical" evidence="2">
    <location>
        <begin position="288"/>
        <end position="308"/>
    </location>
</feature>
<feature type="transmembrane region" description="Helical" evidence="2">
    <location>
        <begin position="320"/>
        <end position="340"/>
    </location>
</feature>
<feature type="transmembrane region" description="Helical" evidence="2">
    <location>
        <begin position="347"/>
        <end position="367"/>
    </location>
</feature>
<feature type="binding site" description="axial binding residue" evidence="2">
    <location>
        <position position="83"/>
    </location>
    <ligand>
        <name>heme b</name>
        <dbReference type="ChEBI" id="CHEBI:60344"/>
        <label>b562</label>
    </ligand>
    <ligandPart>
        <name>Fe</name>
        <dbReference type="ChEBI" id="CHEBI:18248"/>
    </ligandPart>
</feature>
<feature type="binding site" description="axial binding residue" evidence="2">
    <location>
        <position position="97"/>
    </location>
    <ligand>
        <name>heme b</name>
        <dbReference type="ChEBI" id="CHEBI:60344"/>
        <label>b566</label>
    </ligand>
    <ligandPart>
        <name>Fe</name>
        <dbReference type="ChEBI" id="CHEBI:18248"/>
    </ligandPart>
</feature>
<feature type="binding site" description="axial binding residue" evidence="2">
    <location>
        <position position="182"/>
    </location>
    <ligand>
        <name>heme b</name>
        <dbReference type="ChEBI" id="CHEBI:60344"/>
        <label>b562</label>
    </ligand>
    <ligandPart>
        <name>Fe</name>
        <dbReference type="ChEBI" id="CHEBI:18248"/>
    </ligandPart>
</feature>
<feature type="binding site" description="axial binding residue" evidence="2">
    <location>
        <position position="196"/>
    </location>
    <ligand>
        <name>heme b</name>
        <dbReference type="ChEBI" id="CHEBI:60344"/>
        <label>b566</label>
    </ligand>
    <ligandPart>
        <name>Fe</name>
        <dbReference type="ChEBI" id="CHEBI:18248"/>
    </ligandPart>
</feature>
<feature type="binding site" evidence="2">
    <location>
        <position position="201"/>
    </location>
    <ligand>
        <name>a ubiquinone</name>
        <dbReference type="ChEBI" id="CHEBI:16389"/>
    </ligand>
</feature>
<accession>Q9GAW3</accession>
<proteinExistence type="inferred from homology"/>
<gene>
    <name type="primary">MT-CYB</name>
    <name type="synonym">COB</name>
    <name type="synonym">CYTB</name>
    <name type="synonym">MTCYB</name>
</gene>
<sequence length="379" mass="42947">MTIVRKTHPIMKMVNHAFIDLPAPSNISGWWNFGSLLGLCLIIQIASGLFLAMHYTPDTLTAFSSVTHICRDVNYGWLIRYMHANGASLFFICLYLHIGRGIYYGSYSYMETWNIGILLLFRTMATAFMGYVLPWGQMSFWGATVITNLLSAIPYIGTDLVEWIWGGFSVDKATLNRFFAFHFILPFIIAAMAMVHLLFLHETGSNNPLGIPSDCDKIPFHPYYTTKDFLGIVLLLAFFFTLVLFFPDLLGDPDNYSPANPLSTPPHIKPEWYFLFAYAILRSIPNKMGGVIALILSILILALFPHIQTGKQRSLMFRPISQFLFWLLVSDVLVLTWIGGQPVEPPFIIIGQIASVLYFTFILAFLPIAGLNENKMLKW</sequence>
<dbReference type="EMBL" id="AF172836">
    <property type="protein sequence ID" value="AAG27928.1"/>
    <property type="molecule type" value="Genomic_DNA"/>
</dbReference>
<dbReference type="SMR" id="Q9GAW3"/>
<dbReference type="Proteomes" id="UP000081671">
    <property type="component" value="Unplaced"/>
</dbReference>
<dbReference type="GO" id="GO:0005743">
    <property type="term" value="C:mitochondrial inner membrane"/>
    <property type="evidence" value="ECO:0007669"/>
    <property type="project" value="UniProtKB-SubCell"/>
</dbReference>
<dbReference type="GO" id="GO:0045275">
    <property type="term" value="C:respiratory chain complex III"/>
    <property type="evidence" value="ECO:0007669"/>
    <property type="project" value="InterPro"/>
</dbReference>
<dbReference type="GO" id="GO:0046872">
    <property type="term" value="F:metal ion binding"/>
    <property type="evidence" value="ECO:0007669"/>
    <property type="project" value="UniProtKB-KW"/>
</dbReference>
<dbReference type="GO" id="GO:0008121">
    <property type="term" value="F:ubiquinol-cytochrome-c reductase activity"/>
    <property type="evidence" value="ECO:0007669"/>
    <property type="project" value="InterPro"/>
</dbReference>
<dbReference type="GO" id="GO:0006122">
    <property type="term" value="P:mitochondrial electron transport, ubiquinol to cytochrome c"/>
    <property type="evidence" value="ECO:0007669"/>
    <property type="project" value="TreeGrafter"/>
</dbReference>
<dbReference type="CDD" id="cd00290">
    <property type="entry name" value="cytochrome_b_C"/>
    <property type="match status" value="1"/>
</dbReference>
<dbReference type="CDD" id="cd00284">
    <property type="entry name" value="Cytochrome_b_N"/>
    <property type="match status" value="1"/>
</dbReference>
<dbReference type="FunFam" id="1.20.810.10:FF:000002">
    <property type="entry name" value="Cytochrome b"/>
    <property type="match status" value="1"/>
</dbReference>
<dbReference type="Gene3D" id="1.20.810.10">
    <property type="entry name" value="Cytochrome Bc1 Complex, Chain C"/>
    <property type="match status" value="1"/>
</dbReference>
<dbReference type="InterPro" id="IPR005798">
    <property type="entry name" value="Cyt_b/b6_C"/>
</dbReference>
<dbReference type="InterPro" id="IPR036150">
    <property type="entry name" value="Cyt_b/b6_C_sf"/>
</dbReference>
<dbReference type="InterPro" id="IPR005797">
    <property type="entry name" value="Cyt_b/b6_N"/>
</dbReference>
<dbReference type="InterPro" id="IPR027387">
    <property type="entry name" value="Cytb/b6-like_sf"/>
</dbReference>
<dbReference type="InterPro" id="IPR030689">
    <property type="entry name" value="Cytochrome_b"/>
</dbReference>
<dbReference type="InterPro" id="IPR048260">
    <property type="entry name" value="Cytochrome_b_C_euk/bac"/>
</dbReference>
<dbReference type="InterPro" id="IPR048259">
    <property type="entry name" value="Cytochrome_b_N_euk/bac"/>
</dbReference>
<dbReference type="InterPro" id="IPR016174">
    <property type="entry name" value="Di-haem_cyt_TM"/>
</dbReference>
<dbReference type="PANTHER" id="PTHR19271">
    <property type="entry name" value="CYTOCHROME B"/>
    <property type="match status" value="1"/>
</dbReference>
<dbReference type="PANTHER" id="PTHR19271:SF16">
    <property type="entry name" value="CYTOCHROME B"/>
    <property type="match status" value="1"/>
</dbReference>
<dbReference type="Pfam" id="PF00032">
    <property type="entry name" value="Cytochrom_B_C"/>
    <property type="match status" value="1"/>
</dbReference>
<dbReference type="Pfam" id="PF00033">
    <property type="entry name" value="Cytochrome_B"/>
    <property type="match status" value="1"/>
</dbReference>
<dbReference type="PIRSF" id="PIRSF038885">
    <property type="entry name" value="COB"/>
    <property type="match status" value="1"/>
</dbReference>
<dbReference type="SUPFAM" id="SSF81648">
    <property type="entry name" value="a domain/subunit of cytochrome bc1 complex (Ubiquinol-cytochrome c reductase)"/>
    <property type="match status" value="1"/>
</dbReference>
<dbReference type="SUPFAM" id="SSF81342">
    <property type="entry name" value="Transmembrane di-heme cytochromes"/>
    <property type="match status" value="1"/>
</dbReference>
<dbReference type="PROSITE" id="PS51003">
    <property type="entry name" value="CYTB_CTER"/>
    <property type="match status" value="1"/>
</dbReference>
<dbReference type="PROSITE" id="PS51002">
    <property type="entry name" value="CYTB_NTER"/>
    <property type="match status" value="1"/>
</dbReference>
<reference key="1">
    <citation type="journal article" date="2000" name="J. Mammal.">
        <title>Molecular systematics of Dipodomys elator (Rodentia: Heteromyidae) and its phylogeographic implications.</title>
        <authorList>
            <person name="Mantooth S.J."/>
            <person name="Jones C."/>
            <person name="Bradley R.D."/>
        </authorList>
    </citation>
    <scope>NUCLEOTIDE SEQUENCE [GENOMIC DNA]</scope>
    <source>
        <strain>Isolate Do54447</strain>
    </source>
</reference>
<protein>
    <recommendedName>
        <fullName>Cytochrome b</fullName>
    </recommendedName>
    <alternativeName>
        <fullName>Complex III subunit 3</fullName>
    </alternativeName>
    <alternativeName>
        <fullName>Complex III subunit III</fullName>
    </alternativeName>
    <alternativeName>
        <fullName>Cytochrome b-c1 complex subunit 3</fullName>
    </alternativeName>
    <alternativeName>
        <fullName>Ubiquinol-cytochrome-c reductase complex cytochrome b subunit</fullName>
    </alternativeName>
</protein>
<geneLocation type="mitochondrion"/>
<organism>
    <name type="scientific">Dipodomys ordii</name>
    <name type="common">Ord's kangaroo rat</name>
    <dbReference type="NCBI Taxonomy" id="10020"/>
    <lineage>
        <taxon>Eukaryota</taxon>
        <taxon>Metazoa</taxon>
        <taxon>Chordata</taxon>
        <taxon>Craniata</taxon>
        <taxon>Vertebrata</taxon>
        <taxon>Euteleostomi</taxon>
        <taxon>Mammalia</taxon>
        <taxon>Eutheria</taxon>
        <taxon>Euarchontoglires</taxon>
        <taxon>Glires</taxon>
        <taxon>Rodentia</taxon>
        <taxon>Castorimorpha</taxon>
        <taxon>Heteromyidae</taxon>
        <taxon>Dipodomyinae</taxon>
        <taxon>Dipodomys</taxon>
    </lineage>
</organism>
<comment type="function">
    <text evidence="2">Component of the ubiquinol-cytochrome c reductase complex (complex III or cytochrome b-c1 complex) that is part of the mitochondrial respiratory chain. The b-c1 complex mediates electron transfer from ubiquinol to cytochrome c. Contributes to the generation of a proton gradient across the mitochondrial membrane that is then used for ATP synthesis.</text>
</comment>
<comment type="cofactor">
    <cofactor evidence="2">
        <name>heme b</name>
        <dbReference type="ChEBI" id="CHEBI:60344"/>
    </cofactor>
    <text evidence="2">Binds 2 heme b groups non-covalently.</text>
</comment>
<comment type="subunit">
    <text evidence="2">The cytochrome bc1 complex contains 11 subunits: 3 respiratory subunits (MT-CYB, CYC1 and UQCRFS1), 2 core proteins (UQCRC1 and UQCRC2) and 6 low-molecular weight proteins (UQCRH/QCR6, UQCRB/QCR7, UQCRQ/QCR8, UQCR10/QCR9, UQCR11/QCR10 and a cleavage product of UQCRFS1). This cytochrome bc1 complex then forms a dimer.</text>
</comment>
<comment type="subcellular location">
    <subcellularLocation>
        <location evidence="2">Mitochondrion inner membrane</location>
        <topology evidence="2">Multi-pass membrane protein</topology>
    </subcellularLocation>
</comment>
<comment type="miscellaneous">
    <text evidence="1">Heme 1 (or BL or b562) is low-potential and absorbs at about 562 nm, and heme 2 (or BH or b566) is high-potential and absorbs at about 566 nm.</text>
</comment>
<comment type="similarity">
    <text evidence="3 4">Belongs to the cytochrome b family.</text>
</comment>
<comment type="caution">
    <text evidence="2">The full-length protein contains only eight transmembrane helices, not nine as predicted by bioinformatics tools.</text>
</comment>